<proteinExistence type="evidence at protein level"/>
<comment type="function">
    <text evidence="1">Catalyzes the oxidation of primary alcohols including methanol.</text>
</comment>
<comment type="catalytic activity">
    <reaction>
        <text>2 Fe(III)-[cytochrome cL] + a primary alcohol = 2 Fe(II)-[cytochrome cL] + an aldehyde + 2 H(+)</text>
        <dbReference type="Rhea" id="RHEA:51004"/>
        <dbReference type="Rhea" id="RHEA-COMP:12863"/>
        <dbReference type="Rhea" id="RHEA-COMP:12864"/>
        <dbReference type="ChEBI" id="CHEBI:15378"/>
        <dbReference type="ChEBI" id="CHEBI:15734"/>
        <dbReference type="ChEBI" id="CHEBI:17478"/>
        <dbReference type="ChEBI" id="CHEBI:29033"/>
        <dbReference type="ChEBI" id="CHEBI:29034"/>
        <dbReference type="EC" id="1.1.2.7"/>
    </reaction>
</comment>
<comment type="subunit">
    <text evidence="4">Heterotetramer composed of 2 alpha and 2 beta subunits.</text>
</comment>
<comment type="subcellular location">
    <subcellularLocation>
        <location evidence="1">Periplasm</location>
    </subcellularLocation>
</comment>
<comment type="similarity">
    <text evidence="3">Belongs to the methanol dehydrogenase subunit 2 family.</text>
</comment>
<organism>
    <name type="scientific">Methylomonas sp</name>
    <dbReference type="NCBI Taxonomy" id="418"/>
    <lineage>
        <taxon>Bacteria</taxon>
        <taxon>Pseudomonadati</taxon>
        <taxon>Pseudomonadota</taxon>
        <taxon>Gammaproteobacteria</taxon>
        <taxon>Methylococcales</taxon>
        <taxon>Methylococcaceae</taxon>
        <taxon>Methylomonas</taxon>
    </lineage>
</organism>
<evidence type="ECO:0000250" key="1"/>
<evidence type="ECO:0000250" key="2">
    <source>
        <dbReference type="UniProtKB" id="P14775"/>
    </source>
</evidence>
<evidence type="ECO:0000255" key="3"/>
<evidence type="ECO:0000269" key="4">
    <source>
    </source>
</evidence>
<evidence type="ECO:0000303" key="5">
    <source>
    </source>
</evidence>
<evidence type="ECO:0000305" key="6"/>
<accession>Q09053</accession>
<gene>
    <name evidence="5" type="primary">moxI</name>
</gene>
<keyword id="KW-0903">Direct protein sequencing</keyword>
<keyword id="KW-1015">Disulfide bond</keyword>
<keyword id="KW-0485">Methanol utilization</keyword>
<keyword id="KW-0560">Oxidoreductase</keyword>
<keyword id="KW-0574">Periplasm</keyword>
<name>DHM2_METSP</name>
<feature type="chain" id="PRO_0000205343" description="Methanol dehydrogenase [cytochrome c] subunit 2">
    <location>
        <begin position="1"/>
        <end position="18" status="greater than"/>
    </location>
</feature>
<feature type="disulfide bond" evidence="2">
    <location>
        <begin position="6"/>
        <end position="11"/>
    </location>
</feature>
<feature type="non-terminal residue" evidence="5">
    <location>
        <position position="18"/>
    </location>
</feature>
<sequence>YDGTNCKPGVCWEPKPGY</sequence>
<reference evidence="6" key="1">
    <citation type="journal article" date="1993" name="J. Bacteriol.">
        <title>Methanol oxidation genes in the marine methanotroph Methylomonas sp. strain A4.</title>
        <authorList>
            <person name="Waechter-Brulla D."/>
            <person name="DiSpirito A.A."/>
            <person name="Chistoserdova L.V."/>
            <person name="Lidstrom M.E."/>
        </authorList>
    </citation>
    <scope>PROTEIN SEQUENCE</scope>
    <scope>SUBUNIT</scope>
    <source>
        <strain evidence="4">A4</strain>
    </source>
</reference>
<dbReference type="EC" id="1.1.2.7"/>
<dbReference type="GO" id="GO:0042597">
    <property type="term" value="C:periplasmic space"/>
    <property type="evidence" value="ECO:0007669"/>
    <property type="project" value="UniProtKB-SubCell"/>
</dbReference>
<dbReference type="GO" id="GO:0052933">
    <property type="term" value="F:alcohol dehydrogenase (cytochrome c(L)) activity"/>
    <property type="evidence" value="ECO:0007669"/>
    <property type="project" value="UniProtKB-EC"/>
</dbReference>
<dbReference type="GO" id="GO:0004022">
    <property type="term" value="F:alcohol dehydrogenase (NAD+) activity"/>
    <property type="evidence" value="ECO:0007669"/>
    <property type="project" value="InterPro"/>
</dbReference>
<dbReference type="GO" id="GO:0015946">
    <property type="term" value="P:methanol oxidation"/>
    <property type="evidence" value="ECO:0007669"/>
    <property type="project" value="InterPro"/>
</dbReference>
<dbReference type="Gene3D" id="4.10.160.10">
    <property type="entry name" value="Methanol dehydrogenase, beta subunit"/>
    <property type="match status" value="1"/>
</dbReference>
<dbReference type="InterPro" id="IPR003420">
    <property type="entry name" value="Meth_DH_bsu"/>
</dbReference>
<dbReference type="InterPro" id="IPR036557">
    <property type="entry name" value="Meth_DH_bsu_sf"/>
</dbReference>
<dbReference type="Pfam" id="PF02315">
    <property type="entry name" value="MDH"/>
    <property type="match status" value="1"/>
</dbReference>
<dbReference type="SUPFAM" id="SSF48666">
    <property type="entry name" value="Methanol dehydrogenase subunit"/>
    <property type="match status" value="1"/>
</dbReference>
<protein>
    <recommendedName>
        <fullName>Methanol dehydrogenase [cytochrome c] subunit 2</fullName>
        <ecNumber>1.1.2.7</ecNumber>
    </recommendedName>
    <alternativeName>
        <fullName>MDH small subunit beta</fullName>
    </alternativeName>
</protein>